<organism>
    <name type="scientific">Syntrophomonas wolfei subsp. wolfei (strain DSM 2245B / Goettingen)</name>
    <dbReference type="NCBI Taxonomy" id="335541"/>
    <lineage>
        <taxon>Bacteria</taxon>
        <taxon>Bacillati</taxon>
        <taxon>Bacillota</taxon>
        <taxon>Clostridia</taxon>
        <taxon>Eubacteriales</taxon>
        <taxon>Syntrophomonadaceae</taxon>
        <taxon>Syntrophomonas</taxon>
    </lineage>
</organism>
<dbReference type="EMBL" id="CP000448">
    <property type="protein sequence ID" value="ABI69382.1"/>
    <property type="molecule type" value="Genomic_DNA"/>
</dbReference>
<dbReference type="RefSeq" id="WP_011641473.1">
    <property type="nucleotide sequence ID" value="NC_008346.1"/>
</dbReference>
<dbReference type="STRING" id="335541.Swol_2090"/>
<dbReference type="KEGG" id="swo:Swol_2090"/>
<dbReference type="eggNOG" id="COG1342">
    <property type="taxonomic scope" value="Bacteria"/>
</dbReference>
<dbReference type="HOGENOM" id="CLU_094511_1_0_9"/>
<dbReference type="OrthoDB" id="280278at2"/>
<dbReference type="Proteomes" id="UP000001968">
    <property type="component" value="Chromosome"/>
</dbReference>
<dbReference type="HAMAP" id="MF_00674">
    <property type="entry name" value="UPF0251"/>
    <property type="match status" value="1"/>
</dbReference>
<dbReference type="InterPro" id="IPR002852">
    <property type="entry name" value="UPF0251"/>
</dbReference>
<dbReference type="PANTHER" id="PTHR37478">
    <property type="match status" value="1"/>
</dbReference>
<dbReference type="PANTHER" id="PTHR37478:SF2">
    <property type="entry name" value="UPF0251 PROTEIN TK0562"/>
    <property type="match status" value="1"/>
</dbReference>
<dbReference type="Pfam" id="PF02001">
    <property type="entry name" value="DUF134"/>
    <property type="match status" value="1"/>
</dbReference>
<feature type="chain" id="PRO_1000044758" description="UPF0251 protein Swol_2090">
    <location>
        <begin position="1"/>
        <end position="130"/>
    </location>
</feature>
<protein>
    <recommendedName>
        <fullName evidence="1">UPF0251 protein Swol_2090</fullName>
    </recommendedName>
</protein>
<evidence type="ECO:0000255" key="1">
    <source>
        <dbReference type="HAMAP-Rule" id="MF_00674"/>
    </source>
</evidence>
<accession>Q0AV72</accession>
<gene>
    <name type="ordered locus">Swol_2090</name>
</gene>
<comment type="similarity">
    <text evidence="1">Belongs to the UPF0251 family.</text>
</comment>
<proteinExistence type="inferred from homology"/>
<sequence length="130" mass="15112">MAREPRCRRVEYMPRVECFKPAGIPLSRLEEVQIKVEELEAIRLKDYLRLEQEDCARRMQVSRPTFQRILVEARAKIAYALSSGRAIRIEGGNYCMGAGYCRRRQREIREGEPCDFKGIAIRTESDATDN</sequence>
<reference key="1">
    <citation type="journal article" date="2010" name="Environ. Microbiol.">
        <title>The genome of Syntrophomonas wolfei: new insights into syntrophic metabolism and biohydrogen production.</title>
        <authorList>
            <person name="Sieber J.R."/>
            <person name="Sims D.R."/>
            <person name="Han C."/>
            <person name="Kim E."/>
            <person name="Lykidis A."/>
            <person name="Lapidus A.L."/>
            <person name="McDonnald E."/>
            <person name="Rohlin L."/>
            <person name="Culley D.E."/>
            <person name="Gunsalus R."/>
            <person name="McInerney M.J."/>
        </authorList>
    </citation>
    <scope>NUCLEOTIDE SEQUENCE [LARGE SCALE GENOMIC DNA]</scope>
    <source>
        <strain>DSM 2245B / Goettingen</strain>
    </source>
</reference>
<name>Y2090_SYNWW</name>
<keyword id="KW-1185">Reference proteome</keyword>